<name>MOAA_STAAR</name>
<organism>
    <name type="scientific">Staphylococcus aureus (strain MRSA252)</name>
    <dbReference type="NCBI Taxonomy" id="282458"/>
    <lineage>
        <taxon>Bacteria</taxon>
        <taxon>Bacillati</taxon>
        <taxon>Bacillota</taxon>
        <taxon>Bacilli</taxon>
        <taxon>Bacillales</taxon>
        <taxon>Staphylococcaceae</taxon>
        <taxon>Staphylococcus</taxon>
    </lineage>
</organism>
<protein>
    <recommendedName>
        <fullName evidence="1">GTP 3',8-cyclase</fullName>
        <ecNumber evidence="1">4.1.99.22</ecNumber>
    </recommendedName>
    <alternativeName>
        <fullName evidence="1">Molybdenum cofactor biosynthesis protein A</fullName>
    </alternativeName>
</protein>
<proteinExistence type="inferred from homology"/>
<sequence length="340" mass="39050">MVEQIKDKLGRPIRDLRLSVTDRCNFRCDYCMPKEVFGDDFVFLPKNELLTFDEMARIAKVYAELGVKKIRITGGEPLMRRDLDVLIAKLNQIDGIEDIGLTTNGLLLKKHGQKLYDAGLRRINVSLDAIDDTLFQSINNRNIKATTILEQIDYATSIGLNVKVNVVIQKGINDDQIIPMLEYFKDKHIEIRFIEFMDVGNDNGWDFSKVVTKDEMLTMIEQHFEIDPVEPKYFGEVAKYYRHKDNGVQFGLITSVSQSFCSTCTRARLSSDGKFYGCLFATADGFNVKAFIRSGVTDEELKEQFKALWQIRDDRYSDERTAQTVANRQRKKINMNYIGG</sequence>
<gene>
    <name evidence="1" type="primary">moaA</name>
    <name type="ordered locus">SAR2352</name>
</gene>
<reference key="1">
    <citation type="journal article" date="2004" name="Proc. Natl. Acad. Sci. U.S.A.">
        <title>Complete genomes of two clinical Staphylococcus aureus strains: evidence for the rapid evolution of virulence and drug resistance.</title>
        <authorList>
            <person name="Holden M.T.G."/>
            <person name="Feil E.J."/>
            <person name="Lindsay J.A."/>
            <person name="Peacock S.J."/>
            <person name="Day N.P.J."/>
            <person name="Enright M.C."/>
            <person name="Foster T.J."/>
            <person name="Moore C.E."/>
            <person name="Hurst L."/>
            <person name="Atkin R."/>
            <person name="Barron A."/>
            <person name="Bason N."/>
            <person name="Bentley S.D."/>
            <person name="Chillingworth C."/>
            <person name="Chillingworth T."/>
            <person name="Churcher C."/>
            <person name="Clark L."/>
            <person name="Corton C."/>
            <person name="Cronin A."/>
            <person name="Doggett J."/>
            <person name="Dowd L."/>
            <person name="Feltwell T."/>
            <person name="Hance Z."/>
            <person name="Harris B."/>
            <person name="Hauser H."/>
            <person name="Holroyd S."/>
            <person name="Jagels K."/>
            <person name="James K.D."/>
            <person name="Lennard N."/>
            <person name="Line A."/>
            <person name="Mayes R."/>
            <person name="Moule S."/>
            <person name="Mungall K."/>
            <person name="Ormond D."/>
            <person name="Quail M.A."/>
            <person name="Rabbinowitsch E."/>
            <person name="Rutherford K.M."/>
            <person name="Sanders M."/>
            <person name="Sharp S."/>
            <person name="Simmonds M."/>
            <person name="Stevens K."/>
            <person name="Whitehead S."/>
            <person name="Barrell B.G."/>
            <person name="Spratt B.G."/>
            <person name="Parkhill J."/>
        </authorList>
    </citation>
    <scope>NUCLEOTIDE SEQUENCE [LARGE SCALE GENOMIC DNA]</scope>
    <source>
        <strain>MRSA252</strain>
    </source>
</reference>
<accession>Q6GEG6</accession>
<dbReference type="EC" id="4.1.99.22" evidence="1"/>
<dbReference type="EMBL" id="BX571856">
    <property type="protein sequence ID" value="CAG41333.1"/>
    <property type="molecule type" value="Genomic_DNA"/>
</dbReference>
<dbReference type="RefSeq" id="WP_000230171.1">
    <property type="nucleotide sequence ID" value="NC_002952.2"/>
</dbReference>
<dbReference type="SMR" id="Q6GEG6"/>
<dbReference type="KEGG" id="sar:SAR2352"/>
<dbReference type="HOGENOM" id="CLU_009273_0_1_9"/>
<dbReference type="UniPathway" id="UPA00344"/>
<dbReference type="Proteomes" id="UP000000596">
    <property type="component" value="Chromosome"/>
</dbReference>
<dbReference type="GO" id="GO:0051539">
    <property type="term" value="F:4 iron, 4 sulfur cluster binding"/>
    <property type="evidence" value="ECO:0007669"/>
    <property type="project" value="UniProtKB-UniRule"/>
</dbReference>
<dbReference type="GO" id="GO:0061799">
    <property type="term" value="F:cyclic pyranopterin monophosphate synthase activity"/>
    <property type="evidence" value="ECO:0007669"/>
    <property type="project" value="TreeGrafter"/>
</dbReference>
<dbReference type="GO" id="GO:0061798">
    <property type="term" value="F:GTP 3',8'-cyclase activity"/>
    <property type="evidence" value="ECO:0007669"/>
    <property type="project" value="UniProtKB-UniRule"/>
</dbReference>
<dbReference type="GO" id="GO:0005525">
    <property type="term" value="F:GTP binding"/>
    <property type="evidence" value="ECO:0007669"/>
    <property type="project" value="UniProtKB-UniRule"/>
</dbReference>
<dbReference type="GO" id="GO:0046872">
    <property type="term" value="F:metal ion binding"/>
    <property type="evidence" value="ECO:0007669"/>
    <property type="project" value="UniProtKB-KW"/>
</dbReference>
<dbReference type="GO" id="GO:1904047">
    <property type="term" value="F:S-adenosyl-L-methionine binding"/>
    <property type="evidence" value="ECO:0007669"/>
    <property type="project" value="UniProtKB-UniRule"/>
</dbReference>
<dbReference type="GO" id="GO:0006777">
    <property type="term" value="P:Mo-molybdopterin cofactor biosynthetic process"/>
    <property type="evidence" value="ECO:0007669"/>
    <property type="project" value="UniProtKB-UniRule"/>
</dbReference>
<dbReference type="CDD" id="cd01335">
    <property type="entry name" value="Radical_SAM"/>
    <property type="match status" value="1"/>
</dbReference>
<dbReference type="CDD" id="cd21117">
    <property type="entry name" value="Twitch_MoaA"/>
    <property type="match status" value="1"/>
</dbReference>
<dbReference type="Gene3D" id="3.20.20.70">
    <property type="entry name" value="Aldolase class I"/>
    <property type="match status" value="1"/>
</dbReference>
<dbReference type="HAMAP" id="MF_01225_B">
    <property type="entry name" value="MoaA_B"/>
    <property type="match status" value="1"/>
</dbReference>
<dbReference type="InterPro" id="IPR013785">
    <property type="entry name" value="Aldolase_TIM"/>
</dbReference>
<dbReference type="InterPro" id="IPR006638">
    <property type="entry name" value="Elp3/MiaA/NifB-like_rSAM"/>
</dbReference>
<dbReference type="InterPro" id="IPR013483">
    <property type="entry name" value="MoaA"/>
</dbReference>
<dbReference type="InterPro" id="IPR000385">
    <property type="entry name" value="MoaA_NifB_PqqE_Fe-S-bd_CS"/>
</dbReference>
<dbReference type="InterPro" id="IPR010505">
    <property type="entry name" value="MoaA_twitch"/>
</dbReference>
<dbReference type="InterPro" id="IPR050105">
    <property type="entry name" value="MoCo_biosynth_MoaA/MoaC"/>
</dbReference>
<dbReference type="InterPro" id="IPR007197">
    <property type="entry name" value="rSAM"/>
</dbReference>
<dbReference type="NCBIfam" id="TIGR02666">
    <property type="entry name" value="moaA"/>
    <property type="match status" value="1"/>
</dbReference>
<dbReference type="PANTHER" id="PTHR22960:SF0">
    <property type="entry name" value="MOLYBDENUM COFACTOR BIOSYNTHESIS PROTEIN 1"/>
    <property type="match status" value="1"/>
</dbReference>
<dbReference type="PANTHER" id="PTHR22960">
    <property type="entry name" value="MOLYBDOPTERIN COFACTOR SYNTHESIS PROTEIN A"/>
    <property type="match status" value="1"/>
</dbReference>
<dbReference type="Pfam" id="PF06463">
    <property type="entry name" value="Mob_synth_C"/>
    <property type="match status" value="1"/>
</dbReference>
<dbReference type="Pfam" id="PF04055">
    <property type="entry name" value="Radical_SAM"/>
    <property type="match status" value="1"/>
</dbReference>
<dbReference type="SFLD" id="SFLDF00276">
    <property type="entry name" value="cyclic_pyranopterin_phosphate"/>
    <property type="match status" value="1"/>
</dbReference>
<dbReference type="SFLD" id="SFLDG01067">
    <property type="entry name" value="SPASM/twitch_domain_containing"/>
    <property type="match status" value="1"/>
</dbReference>
<dbReference type="SMART" id="SM00729">
    <property type="entry name" value="Elp3"/>
    <property type="match status" value="1"/>
</dbReference>
<dbReference type="SUPFAM" id="SSF102114">
    <property type="entry name" value="Radical SAM enzymes"/>
    <property type="match status" value="1"/>
</dbReference>
<dbReference type="PROSITE" id="PS01305">
    <property type="entry name" value="MOAA_NIFB_PQQE"/>
    <property type="match status" value="1"/>
</dbReference>
<dbReference type="PROSITE" id="PS51918">
    <property type="entry name" value="RADICAL_SAM"/>
    <property type="match status" value="1"/>
</dbReference>
<comment type="function">
    <text evidence="1">Catalyzes the cyclization of GTP to (8S)-3',8-cyclo-7,8-dihydroguanosine 5'-triphosphate.</text>
</comment>
<comment type="catalytic activity">
    <reaction evidence="1">
        <text>GTP + AH2 + S-adenosyl-L-methionine = (8S)-3',8-cyclo-7,8-dihydroguanosine 5'-triphosphate + 5'-deoxyadenosine + L-methionine + A + H(+)</text>
        <dbReference type="Rhea" id="RHEA:49576"/>
        <dbReference type="ChEBI" id="CHEBI:13193"/>
        <dbReference type="ChEBI" id="CHEBI:15378"/>
        <dbReference type="ChEBI" id="CHEBI:17319"/>
        <dbReference type="ChEBI" id="CHEBI:17499"/>
        <dbReference type="ChEBI" id="CHEBI:37565"/>
        <dbReference type="ChEBI" id="CHEBI:57844"/>
        <dbReference type="ChEBI" id="CHEBI:59789"/>
        <dbReference type="ChEBI" id="CHEBI:131766"/>
        <dbReference type="EC" id="4.1.99.22"/>
    </reaction>
</comment>
<comment type="cofactor">
    <cofactor evidence="1">
        <name>[4Fe-4S] cluster</name>
        <dbReference type="ChEBI" id="CHEBI:49883"/>
    </cofactor>
    <text evidence="1">Binds 2 [4Fe-4S] clusters. Binds 1 [4Fe-4S] cluster coordinated with 3 cysteines and an exchangeable S-adenosyl-L-methionine and 1 [4Fe-4S] cluster coordinated with 3 cysteines and the GTP-derived substrate.</text>
</comment>
<comment type="pathway">
    <text evidence="1">Cofactor biosynthesis; molybdopterin biosynthesis.</text>
</comment>
<comment type="subunit">
    <text evidence="1">Monomer and homodimer.</text>
</comment>
<comment type="similarity">
    <text evidence="1">Belongs to the radical SAM superfamily. MoaA family.</text>
</comment>
<keyword id="KW-0004">4Fe-4S</keyword>
<keyword id="KW-0342">GTP-binding</keyword>
<keyword id="KW-0408">Iron</keyword>
<keyword id="KW-0411">Iron-sulfur</keyword>
<keyword id="KW-0456">Lyase</keyword>
<keyword id="KW-0479">Metal-binding</keyword>
<keyword id="KW-0501">Molybdenum cofactor biosynthesis</keyword>
<keyword id="KW-0547">Nucleotide-binding</keyword>
<keyword id="KW-0949">S-adenosyl-L-methionine</keyword>
<evidence type="ECO:0000255" key="1">
    <source>
        <dbReference type="HAMAP-Rule" id="MF_01225"/>
    </source>
</evidence>
<evidence type="ECO:0000255" key="2">
    <source>
        <dbReference type="PROSITE-ProRule" id="PRU01266"/>
    </source>
</evidence>
<feature type="chain" id="PRO_0000152993" description="GTP 3',8-cyclase">
    <location>
        <begin position="1"/>
        <end position="340"/>
    </location>
</feature>
<feature type="domain" description="Radical SAM core" evidence="2">
    <location>
        <begin position="8"/>
        <end position="227"/>
    </location>
</feature>
<feature type="binding site" evidence="1">
    <location>
        <position position="17"/>
    </location>
    <ligand>
        <name>GTP</name>
        <dbReference type="ChEBI" id="CHEBI:37565"/>
    </ligand>
</feature>
<feature type="binding site" evidence="1">
    <location>
        <position position="24"/>
    </location>
    <ligand>
        <name>[4Fe-4S] cluster</name>
        <dbReference type="ChEBI" id="CHEBI:49883"/>
        <label>1</label>
        <note>4Fe-4S-S-AdoMet</note>
    </ligand>
</feature>
<feature type="binding site" evidence="1">
    <location>
        <position position="28"/>
    </location>
    <ligand>
        <name>[4Fe-4S] cluster</name>
        <dbReference type="ChEBI" id="CHEBI:49883"/>
        <label>1</label>
        <note>4Fe-4S-S-AdoMet</note>
    </ligand>
</feature>
<feature type="binding site" evidence="1">
    <location>
        <position position="30"/>
    </location>
    <ligand>
        <name>S-adenosyl-L-methionine</name>
        <dbReference type="ChEBI" id="CHEBI:59789"/>
    </ligand>
</feature>
<feature type="binding site" evidence="1">
    <location>
        <position position="31"/>
    </location>
    <ligand>
        <name>[4Fe-4S] cluster</name>
        <dbReference type="ChEBI" id="CHEBI:49883"/>
        <label>1</label>
        <note>4Fe-4S-S-AdoMet</note>
    </ligand>
</feature>
<feature type="binding site" evidence="1">
    <location>
        <position position="71"/>
    </location>
    <ligand>
        <name>GTP</name>
        <dbReference type="ChEBI" id="CHEBI:37565"/>
    </ligand>
</feature>
<feature type="binding site" evidence="1">
    <location>
        <position position="75"/>
    </location>
    <ligand>
        <name>S-adenosyl-L-methionine</name>
        <dbReference type="ChEBI" id="CHEBI:59789"/>
    </ligand>
</feature>
<feature type="binding site" evidence="1">
    <location>
        <position position="102"/>
    </location>
    <ligand>
        <name>GTP</name>
        <dbReference type="ChEBI" id="CHEBI:37565"/>
    </ligand>
</feature>
<feature type="binding site" evidence="1">
    <location>
        <position position="126"/>
    </location>
    <ligand>
        <name>S-adenosyl-L-methionine</name>
        <dbReference type="ChEBI" id="CHEBI:59789"/>
    </ligand>
</feature>
<feature type="binding site" evidence="1">
    <location>
        <position position="163"/>
    </location>
    <ligand>
        <name>GTP</name>
        <dbReference type="ChEBI" id="CHEBI:37565"/>
    </ligand>
</feature>
<feature type="binding site" evidence="1">
    <location>
        <position position="197"/>
    </location>
    <ligand>
        <name>S-adenosyl-L-methionine</name>
        <dbReference type="ChEBI" id="CHEBI:59789"/>
    </ligand>
</feature>
<feature type="binding site" evidence="1">
    <location>
        <position position="261"/>
    </location>
    <ligand>
        <name>[4Fe-4S] cluster</name>
        <dbReference type="ChEBI" id="CHEBI:49883"/>
        <label>2</label>
        <note>4Fe-4S-substrate</note>
    </ligand>
</feature>
<feature type="binding site" evidence="1">
    <location>
        <position position="264"/>
    </location>
    <ligand>
        <name>[4Fe-4S] cluster</name>
        <dbReference type="ChEBI" id="CHEBI:49883"/>
        <label>2</label>
        <note>4Fe-4S-substrate</note>
    </ligand>
</feature>
<feature type="binding site" evidence="1">
    <location>
        <begin position="266"/>
        <end position="268"/>
    </location>
    <ligand>
        <name>GTP</name>
        <dbReference type="ChEBI" id="CHEBI:37565"/>
    </ligand>
</feature>
<feature type="binding site" evidence="1">
    <location>
        <position position="278"/>
    </location>
    <ligand>
        <name>[4Fe-4S] cluster</name>
        <dbReference type="ChEBI" id="CHEBI:49883"/>
        <label>2</label>
        <note>4Fe-4S-substrate</note>
    </ligand>
</feature>